<protein>
    <recommendedName>
        <fullName evidence="5">tRNA uridine(34) hydroxylase</fullName>
        <ecNumber evidence="3">1.14.-.-</ecNumber>
    </recommendedName>
    <alternativeName>
        <fullName>ORF39.9</fullName>
    </alternativeName>
    <alternativeName>
        <fullName evidence="4">tRNA hydroxylation protein O</fullName>
    </alternativeName>
</protein>
<organism>
    <name type="scientific">Escherichia coli (strain K12)</name>
    <dbReference type="NCBI Taxonomy" id="83333"/>
    <lineage>
        <taxon>Bacteria</taxon>
        <taxon>Pseudomonadati</taxon>
        <taxon>Pseudomonadota</taxon>
        <taxon>Gammaproteobacteria</taxon>
        <taxon>Enterobacterales</taxon>
        <taxon>Enterobacteriaceae</taxon>
        <taxon>Escherichia</taxon>
    </lineage>
</organism>
<gene>
    <name evidence="4" type="primary">trhO</name>
    <name type="synonym">yceA</name>
    <name type="ordered locus">b1055</name>
    <name type="ordered locus">JW1042</name>
</gene>
<keyword id="KW-0560">Oxidoreductase</keyword>
<keyword id="KW-1185">Reference proteome</keyword>
<keyword id="KW-0819">tRNA processing</keyword>
<feature type="chain" id="PRO_0000161470" description="tRNA uridine(34) hydroxylase">
    <location>
        <begin position="1"/>
        <end position="350"/>
    </location>
</feature>
<feature type="domain" description="Rhodanese" evidence="1">
    <location>
        <begin position="146"/>
        <end position="240"/>
    </location>
</feature>
<feature type="active site" description="Cysteine persulfide intermediate" evidence="1">
    <location>
        <position position="200"/>
    </location>
</feature>
<feature type="mutagenesis site" description="Reduced 5-carboxymethoxyuridine formation." evidence="3">
    <original>K</original>
    <variation>A</variation>
    <location>
        <position position="112"/>
    </location>
</feature>
<feature type="mutagenesis site" description="Reduced 5-carboxymethoxyuridine formation." evidence="3">
    <original>R</original>
    <variation>A</variation>
    <location>
        <position position="114"/>
    </location>
</feature>
<feature type="mutagenesis site" description="Reduced 5-carboxymethoxyuridine formation." evidence="3">
    <original>C</original>
    <variation>A</variation>
    <location>
        <position position="200"/>
    </location>
</feature>
<feature type="mutagenesis site" description="Reduced 5-carboxymethoxyuridine formation." evidence="3">
    <original>T</original>
    <variation>A</variation>
    <location>
        <position position="201"/>
    </location>
</feature>
<feature type="mutagenesis site" description="Does not affect 5-carboxymethoxyuridine formation." evidence="3">
    <original>G</original>
    <variation>A</variation>
    <location>
        <position position="202"/>
    </location>
</feature>
<feature type="mutagenesis site" description="Reduced 5-carboxymethoxyuridine formation." evidence="3">
    <original>G</original>
    <variation>A</variation>
    <location>
        <position position="203"/>
    </location>
</feature>
<feature type="mutagenesis site" description="Reduced 5-carboxymethoxyuridine formation." evidence="3">
    <original>R</original>
    <variation>A</variation>
    <location>
        <position position="205"/>
    </location>
</feature>
<feature type="mutagenesis site" description="Does not affect 5-carboxymethoxyuridine formation." evidence="3">
    <original>C</original>
    <variation>A</variation>
    <location>
        <position position="206"/>
    </location>
</feature>
<feature type="sequence conflict" description="In Ref. 1; CAA43318." evidence="5" ref="1">
    <original>QL</original>
    <variation>HV</variation>
    <location>
        <begin position="82"/>
        <end position="83"/>
    </location>
</feature>
<feature type="sequence conflict" description="In Ref. 1; CAA43318." evidence="5" ref="1">
    <original>A</original>
    <variation>R</variation>
    <location>
        <position position="312"/>
    </location>
</feature>
<dbReference type="EC" id="1.14.-.-" evidence="3"/>
<dbReference type="EMBL" id="X61000">
    <property type="protein sequence ID" value="CAA43318.1"/>
    <property type="molecule type" value="Genomic_DNA"/>
</dbReference>
<dbReference type="EMBL" id="U00096">
    <property type="protein sequence ID" value="AAC74139.1"/>
    <property type="molecule type" value="Genomic_DNA"/>
</dbReference>
<dbReference type="EMBL" id="AP009048">
    <property type="protein sequence ID" value="BAA35853.1"/>
    <property type="molecule type" value="Genomic_DNA"/>
</dbReference>
<dbReference type="PIR" id="D64848">
    <property type="entry name" value="D64848"/>
</dbReference>
<dbReference type="RefSeq" id="NP_415573.1">
    <property type="nucleotide sequence ID" value="NC_000913.3"/>
</dbReference>
<dbReference type="RefSeq" id="WP_001144615.1">
    <property type="nucleotide sequence ID" value="NZ_SSZK01000058.1"/>
</dbReference>
<dbReference type="SMR" id="P24188"/>
<dbReference type="BioGRID" id="4262843">
    <property type="interactions" value="128"/>
</dbReference>
<dbReference type="DIP" id="DIP-11521N"/>
<dbReference type="FunCoup" id="P24188">
    <property type="interactions" value="502"/>
</dbReference>
<dbReference type="IntAct" id="P24188">
    <property type="interactions" value="7"/>
</dbReference>
<dbReference type="STRING" id="511145.b1055"/>
<dbReference type="PaxDb" id="511145-b1055"/>
<dbReference type="EnsemblBacteria" id="AAC74139">
    <property type="protein sequence ID" value="AAC74139"/>
    <property type="gene ID" value="b1055"/>
</dbReference>
<dbReference type="GeneID" id="945601"/>
<dbReference type="KEGG" id="ecj:JW1042"/>
<dbReference type="KEGG" id="eco:b1055"/>
<dbReference type="KEGG" id="ecoc:C3026_06420"/>
<dbReference type="PATRIC" id="fig|1411691.4.peg.1214"/>
<dbReference type="EchoBASE" id="EB1106"/>
<dbReference type="eggNOG" id="COG1054">
    <property type="taxonomic scope" value="Bacteria"/>
</dbReference>
<dbReference type="HOGENOM" id="CLU_038878_1_1_6"/>
<dbReference type="InParanoid" id="P24188"/>
<dbReference type="OMA" id="CDTHTNC"/>
<dbReference type="OrthoDB" id="9778326at2"/>
<dbReference type="PhylomeDB" id="P24188"/>
<dbReference type="BioCyc" id="EcoCyc:EG11116-MONOMER"/>
<dbReference type="BioCyc" id="MetaCyc:EG11116-MONOMER"/>
<dbReference type="PRO" id="PR:P24188"/>
<dbReference type="Proteomes" id="UP000000625">
    <property type="component" value="Chromosome"/>
</dbReference>
<dbReference type="GO" id="GO:0016491">
    <property type="term" value="F:oxidoreductase activity"/>
    <property type="evidence" value="ECO:0000314"/>
    <property type="project" value="EcoCyc"/>
</dbReference>
<dbReference type="GO" id="GO:0016705">
    <property type="term" value="F:oxidoreductase activity, acting on paired donors, with incorporation or reduction of molecular oxygen"/>
    <property type="evidence" value="ECO:0000314"/>
    <property type="project" value="UniProtKB"/>
</dbReference>
<dbReference type="GO" id="GO:0006400">
    <property type="term" value="P:tRNA modification"/>
    <property type="evidence" value="ECO:0000314"/>
    <property type="project" value="UniProtKB"/>
</dbReference>
<dbReference type="GO" id="GO:0002098">
    <property type="term" value="P:tRNA wobble uridine modification"/>
    <property type="evidence" value="ECO:0000315"/>
    <property type="project" value="EcoCyc"/>
</dbReference>
<dbReference type="CDD" id="cd01518">
    <property type="entry name" value="RHOD_YceA"/>
    <property type="match status" value="1"/>
</dbReference>
<dbReference type="Gene3D" id="3.30.70.100">
    <property type="match status" value="1"/>
</dbReference>
<dbReference type="Gene3D" id="3.40.250.10">
    <property type="entry name" value="Rhodanese-like domain"/>
    <property type="match status" value="1"/>
</dbReference>
<dbReference type="HAMAP" id="MF_00469">
    <property type="entry name" value="TrhO"/>
    <property type="match status" value="1"/>
</dbReference>
<dbReference type="InterPro" id="IPR001763">
    <property type="entry name" value="Rhodanese-like_dom"/>
</dbReference>
<dbReference type="InterPro" id="IPR036873">
    <property type="entry name" value="Rhodanese-like_dom_sf"/>
</dbReference>
<dbReference type="InterPro" id="IPR022111">
    <property type="entry name" value="Rhodanese_C"/>
</dbReference>
<dbReference type="InterPro" id="IPR020936">
    <property type="entry name" value="TrhO"/>
</dbReference>
<dbReference type="InterPro" id="IPR040503">
    <property type="entry name" value="TRHO_N"/>
</dbReference>
<dbReference type="NCBIfam" id="NF001133">
    <property type="entry name" value="PRK00142.1-1"/>
    <property type="match status" value="1"/>
</dbReference>
<dbReference type="PANTHER" id="PTHR43846:SF1">
    <property type="entry name" value="TRNA URIDINE(34) HYDROXYLASE"/>
    <property type="match status" value="1"/>
</dbReference>
<dbReference type="PANTHER" id="PTHR43846">
    <property type="entry name" value="UPF0176 PROTEIN YCEA"/>
    <property type="match status" value="1"/>
</dbReference>
<dbReference type="Pfam" id="PF00581">
    <property type="entry name" value="Rhodanese"/>
    <property type="match status" value="1"/>
</dbReference>
<dbReference type="Pfam" id="PF12368">
    <property type="entry name" value="Rhodanese_C"/>
    <property type="match status" value="1"/>
</dbReference>
<dbReference type="Pfam" id="PF17773">
    <property type="entry name" value="UPF0176_N"/>
    <property type="match status" value="1"/>
</dbReference>
<dbReference type="SMART" id="SM00450">
    <property type="entry name" value="RHOD"/>
    <property type="match status" value="1"/>
</dbReference>
<dbReference type="SUPFAM" id="SSF52821">
    <property type="entry name" value="Rhodanese/Cell cycle control phosphatase"/>
    <property type="match status" value="1"/>
</dbReference>
<dbReference type="PROSITE" id="PS50206">
    <property type="entry name" value="RHODANESE_3"/>
    <property type="match status" value="1"/>
</dbReference>
<sequence>MPVLHNRISNDALKAKMLAESEPRTTISFYKYFHIADPKATRDALYQLFTALNVFGRVYLAHEGINAQISVPASNVETFRAQLYAFDPALEGLRLNIALDDDGKSFWVLRMKVRDRIVADGIDDPHFDASNVGEYLQAAEVNAMLDDPDALFIDMRNHYEYEVGHFENALEIPADTFREQLPKAVEMMQAHKDKKIVMYCTGGIRCEKASAWMKHNGFNKVWHIEGGIIEYARKAREQGLPVRFIGKNFVFDERMGERISDEIIAHCHQCGAPCDSHTNCKNDGCHLLFIQCPVCAEKYKGCCSEICCEESALPPEEQRRRRAGRENGNKIFNKSRGRLNTTLCIPDPTE</sequence>
<proteinExistence type="evidence at protein level"/>
<accession>P24188</accession>
<accession>P75924</accession>
<comment type="function">
    <text evidence="3">Catalyzes oxygen-dependent 5-hydroxyuridine (ho5U) modification at position 34 in tRNAs, the first step in 5-carboxymethoxyuridine (cmo5U) biosynthesis (PubMed:31253794). May be part of an alternate pathway, which is able to bypass cmo5U biogenesis in a subset of tRNAs under aerobic conditions (PubMed:31253794).</text>
</comment>
<comment type="catalytic activity">
    <reaction evidence="3">
        <text>uridine(34) in tRNA + AH2 + O2 = 5-hydroxyuridine(34) in tRNA + A + H2O</text>
        <dbReference type="Rhea" id="RHEA:64224"/>
        <dbReference type="Rhea" id="RHEA-COMP:11727"/>
        <dbReference type="Rhea" id="RHEA-COMP:13381"/>
        <dbReference type="ChEBI" id="CHEBI:13193"/>
        <dbReference type="ChEBI" id="CHEBI:15377"/>
        <dbReference type="ChEBI" id="CHEBI:15379"/>
        <dbReference type="ChEBI" id="CHEBI:17499"/>
        <dbReference type="ChEBI" id="CHEBI:65315"/>
        <dbReference type="ChEBI" id="CHEBI:136877"/>
    </reaction>
</comment>
<comment type="interaction">
    <interactant intactId="EBI-560455">
        <id>P24188</id>
    </interactant>
    <interactant intactId="EBI-543702">
        <id>P0A7K2</id>
        <label>rplL</label>
    </interactant>
    <organismsDiffer>false</organismsDiffer>
    <experiments>3</experiments>
</comment>
<comment type="induction">
    <text evidence="2">Is expressed at all temperatures, but accumulation of yceA transcripts decline with raising temperature. Thus, its expression is repressed by heat shock.</text>
</comment>
<comment type="disruption phenotype">
    <text evidence="3">Deletion mutant displays only slight reduction of 5-hydroxyuridine (ho5U) modification at position 34 in tRNAs (PubMed:31253794). Cells lacking both trhP and trhO show complete absence of 5-carboxymethoxyuridine (cmo5U) modification in tRNAs; cells display a temperature-sensitive phenotype and decode codons ending in G (GCG and UCG) less efficiently than the wild-type strain (PubMed:31253794).</text>
</comment>
<comment type="similarity">
    <text evidence="1">Belongs to the TrhO family.</text>
</comment>
<evidence type="ECO:0000255" key="1">
    <source>
        <dbReference type="HAMAP-Rule" id="MF_00469"/>
    </source>
</evidence>
<evidence type="ECO:0000269" key="2">
    <source>
    </source>
</evidence>
<evidence type="ECO:0000269" key="3">
    <source>
    </source>
</evidence>
<evidence type="ECO:0000303" key="4">
    <source>
    </source>
</evidence>
<evidence type="ECO:0000305" key="5"/>
<reference key="1">
    <citation type="journal article" date="1991" name="Mol. Microbiol.">
        <title>Sequencing, mutational analysis, and transcriptional regulation of the Escherichia coli htrB gene.</title>
        <authorList>
            <person name="Karow M.L."/>
            <person name="Georgopoulos C."/>
        </authorList>
    </citation>
    <scope>NUCLEOTIDE SEQUENCE [GENOMIC DNA]</scope>
    <scope>INDUCTION</scope>
    <source>
        <strain>K12</strain>
    </source>
</reference>
<reference key="2">
    <citation type="journal article" date="1996" name="DNA Res.">
        <title>A 718-kb DNA sequence of the Escherichia coli K-12 genome corresponding to the 12.7-28.0 min region on the linkage map.</title>
        <authorList>
            <person name="Oshima T."/>
            <person name="Aiba H."/>
            <person name="Baba T."/>
            <person name="Fujita K."/>
            <person name="Hayashi K."/>
            <person name="Honjo A."/>
            <person name="Ikemoto K."/>
            <person name="Inada T."/>
            <person name="Itoh T."/>
            <person name="Kajihara M."/>
            <person name="Kanai K."/>
            <person name="Kashimoto K."/>
            <person name="Kimura S."/>
            <person name="Kitagawa M."/>
            <person name="Makino K."/>
            <person name="Masuda S."/>
            <person name="Miki T."/>
            <person name="Mizobuchi K."/>
            <person name="Mori H."/>
            <person name="Motomura K."/>
            <person name="Nakamura Y."/>
            <person name="Nashimoto H."/>
            <person name="Nishio Y."/>
            <person name="Saito N."/>
            <person name="Sampei G."/>
            <person name="Seki Y."/>
            <person name="Tagami H."/>
            <person name="Takemoto K."/>
            <person name="Wada C."/>
            <person name="Yamamoto Y."/>
            <person name="Yano M."/>
            <person name="Horiuchi T."/>
        </authorList>
    </citation>
    <scope>NUCLEOTIDE SEQUENCE [LARGE SCALE GENOMIC DNA]</scope>
    <source>
        <strain>K12 / W3110 / ATCC 27325 / DSM 5911</strain>
    </source>
</reference>
<reference key="3">
    <citation type="journal article" date="1997" name="Science">
        <title>The complete genome sequence of Escherichia coli K-12.</title>
        <authorList>
            <person name="Blattner F.R."/>
            <person name="Plunkett G. III"/>
            <person name="Bloch C.A."/>
            <person name="Perna N.T."/>
            <person name="Burland V."/>
            <person name="Riley M."/>
            <person name="Collado-Vides J."/>
            <person name="Glasner J.D."/>
            <person name="Rode C.K."/>
            <person name="Mayhew G.F."/>
            <person name="Gregor J."/>
            <person name="Davis N.W."/>
            <person name="Kirkpatrick H.A."/>
            <person name="Goeden M.A."/>
            <person name="Rose D.J."/>
            <person name="Mau B."/>
            <person name="Shao Y."/>
        </authorList>
    </citation>
    <scope>NUCLEOTIDE SEQUENCE [LARGE SCALE GENOMIC DNA]</scope>
    <source>
        <strain>K12 / MG1655 / ATCC 47076</strain>
    </source>
</reference>
<reference key="4">
    <citation type="journal article" date="2006" name="Mol. Syst. Biol.">
        <title>Highly accurate genome sequences of Escherichia coli K-12 strains MG1655 and W3110.</title>
        <authorList>
            <person name="Hayashi K."/>
            <person name="Morooka N."/>
            <person name="Yamamoto Y."/>
            <person name="Fujita K."/>
            <person name="Isono K."/>
            <person name="Choi S."/>
            <person name="Ohtsubo E."/>
            <person name="Baba T."/>
            <person name="Wanner B.L."/>
            <person name="Mori H."/>
            <person name="Horiuchi T."/>
        </authorList>
    </citation>
    <scope>NUCLEOTIDE SEQUENCE [LARGE SCALE GENOMIC DNA]</scope>
    <source>
        <strain>K12 / W3110 / ATCC 27325 / DSM 5911</strain>
    </source>
</reference>
<reference key="5">
    <citation type="journal article" date="2019" name="Nat. Commun.">
        <title>Dual pathways of tRNA hydroxylation ensure efficient translation by expanding decoding capability.</title>
        <authorList>
            <person name="Sakai Y."/>
            <person name="Kimura S."/>
            <person name="Suzuki T."/>
        </authorList>
    </citation>
    <scope>FUNCTION</scope>
    <scope>CATALYTIC ACTIVITY</scope>
    <scope>DISRUPTION PHENOTYPE</scope>
    <scope>MUTAGENESIS OF LYS-112; ARG-114; CYS-200; THR-201; GLY-202; GLY-203; ARG-205 AND CYS-206</scope>
</reference>
<name>TRHO_ECOLI</name>